<dbReference type="EC" id="3.1.3.5" evidence="2"/>
<dbReference type="EC" id="3.1.3.99" evidence="2"/>
<dbReference type="EC" id="2.7.1.77" evidence="2"/>
<dbReference type="EMBL" id="CR859201">
    <property type="protein sequence ID" value="CAH91388.1"/>
    <property type="molecule type" value="mRNA"/>
</dbReference>
<dbReference type="RefSeq" id="NP_001125821.1">
    <property type="nucleotide sequence ID" value="NM_001132349.1"/>
</dbReference>
<dbReference type="RefSeq" id="XP_009244025.1">
    <property type="nucleotide sequence ID" value="XM_009245750.4"/>
</dbReference>
<dbReference type="RefSeq" id="XP_054377523.1">
    <property type="nucleotide sequence ID" value="XM_054521548.2"/>
</dbReference>
<dbReference type="SMR" id="Q5RA22"/>
<dbReference type="FunCoup" id="Q5RA22">
    <property type="interactions" value="1324"/>
</dbReference>
<dbReference type="STRING" id="9601.ENSPPYP00000003045"/>
<dbReference type="Ensembl" id="ENSPPYT00000003149.2">
    <property type="protein sequence ID" value="ENSPPYP00000003045.1"/>
    <property type="gene ID" value="ENSPPYG00000002616.2"/>
</dbReference>
<dbReference type="GeneID" id="100172749"/>
<dbReference type="KEGG" id="pon:100172749"/>
<dbReference type="CTD" id="22978"/>
<dbReference type="eggNOG" id="KOG2469">
    <property type="taxonomic scope" value="Eukaryota"/>
</dbReference>
<dbReference type="GeneTree" id="ENSGT00940000162369"/>
<dbReference type="HOGENOM" id="CLU_017845_3_0_1"/>
<dbReference type="InParanoid" id="Q5RA22"/>
<dbReference type="OrthoDB" id="10252832at2759"/>
<dbReference type="TreeFam" id="TF315266"/>
<dbReference type="Proteomes" id="UP000001595">
    <property type="component" value="Chromosome 10"/>
</dbReference>
<dbReference type="GO" id="GO:0005829">
    <property type="term" value="C:cytosol"/>
    <property type="evidence" value="ECO:0000250"/>
    <property type="project" value="UniProtKB"/>
</dbReference>
<dbReference type="GO" id="GO:0008253">
    <property type="term" value="F:5'-nucleotidase activity"/>
    <property type="evidence" value="ECO:0000250"/>
    <property type="project" value="UniProtKB"/>
</dbReference>
<dbReference type="GO" id="GO:0005524">
    <property type="term" value="F:ATP binding"/>
    <property type="evidence" value="ECO:0000250"/>
    <property type="project" value="UniProtKB"/>
</dbReference>
<dbReference type="GO" id="GO:0050484">
    <property type="term" value="F:GMP 5'-nucleotidase activity"/>
    <property type="evidence" value="ECO:0000250"/>
    <property type="project" value="UniProtKB"/>
</dbReference>
<dbReference type="GO" id="GO:0042802">
    <property type="term" value="F:identical protein binding"/>
    <property type="evidence" value="ECO:0000250"/>
    <property type="project" value="UniProtKB"/>
</dbReference>
<dbReference type="GO" id="GO:0050483">
    <property type="term" value="F:IMP 5'-nucleotidase activity"/>
    <property type="evidence" value="ECO:0000250"/>
    <property type="project" value="UniProtKB"/>
</dbReference>
<dbReference type="GO" id="GO:0046872">
    <property type="term" value="F:metal ion binding"/>
    <property type="evidence" value="ECO:0007669"/>
    <property type="project" value="UniProtKB-KW"/>
</dbReference>
<dbReference type="GO" id="GO:0050146">
    <property type="term" value="F:nucleoside phosphotransferase activity"/>
    <property type="evidence" value="ECO:0000250"/>
    <property type="project" value="UniProtKB"/>
</dbReference>
<dbReference type="GO" id="GO:0106411">
    <property type="term" value="F:XMP 5'-nucleosidase activity"/>
    <property type="evidence" value="ECO:0007669"/>
    <property type="project" value="RHEA"/>
</dbReference>
<dbReference type="GO" id="GO:0046085">
    <property type="term" value="P:adenosine metabolic process"/>
    <property type="evidence" value="ECO:0007669"/>
    <property type="project" value="TreeGrafter"/>
</dbReference>
<dbReference type="GO" id="GO:0046054">
    <property type="term" value="P:dGMP metabolic process"/>
    <property type="evidence" value="ECO:0000250"/>
    <property type="project" value="UniProtKB"/>
</dbReference>
<dbReference type="GO" id="GO:0046037">
    <property type="term" value="P:GMP metabolic process"/>
    <property type="evidence" value="ECO:0000250"/>
    <property type="project" value="UniProtKB"/>
</dbReference>
<dbReference type="GO" id="GO:0046040">
    <property type="term" value="P:IMP metabolic process"/>
    <property type="evidence" value="ECO:0000250"/>
    <property type="project" value="UniProtKB"/>
</dbReference>
<dbReference type="CDD" id="cd07522">
    <property type="entry name" value="HAD_cN-II"/>
    <property type="match status" value="1"/>
</dbReference>
<dbReference type="FunFam" id="3.40.50.1000:FF:000021">
    <property type="entry name" value="NT5C2 isoform 1"/>
    <property type="match status" value="1"/>
</dbReference>
<dbReference type="Gene3D" id="3.40.50.1000">
    <property type="entry name" value="HAD superfamily/HAD-like"/>
    <property type="match status" value="2"/>
</dbReference>
<dbReference type="InterPro" id="IPR036412">
    <property type="entry name" value="HAD-like_sf"/>
</dbReference>
<dbReference type="InterPro" id="IPR008380">
    <property type="entry name" value="HAD-SF_hydro_IG_5-nucl"/>
</dbReference>
<dbReference type="InterPro" id="IPR023214">
    <property type="entry name" value="HAD_sf"/>
</dbReference>
<dbReference type="InterPro" id="IPR016695">
    <property type="entry name" value="Pur_nucleotidase"/>
</dbReference>
<dbReference type="NCBIfam" id="TIGR02244">
    <property type="entry name" value="HAD-IG-Ncltidse"/>
    <property type="match status" value="1"/>
</dbReference>
<dbReference type="PANTHER" id="PTHR12103">
    <property type="entry name" value="5'-NUCLEOTIDASE DOMAIN-CONTAINING"/>
    <property type="match status" value="1"/>
</dbReference>
<dbReference type="PANTHER" id="PTHR12103:SF17">
    <property type="entry name" value="CYTOSOLIC PURINE 5'-NUCLEOTIDASE"/>
    <property type="match status" value="1"/>
</dbReference>
<dbReference type="Pfam" id="PF05761">
    <property type="entry name" value="5_nucleotid"/>
    <property type="match status" value="1"/>
</dbReference>
<dbReference type="PIRSF" id="PIRSF017434">
    <property type="entry name" value="Purine_5'-nucleotidase"/>
    <property type="match status" value="1"/>
</dbReference>
<dbReference type="SUPFAM" id="SSF56784">
    <property type="entry name" value="HAD-like"/>
    <property type="match status" value="1"/>
</dbReference>
<gene>
    <name evidence="2" type="primary">NT5C2</name>
</gene>
<accession>Q5RA22</accession>
<reference key="1">
    <citation type="submission" date="2004-11" db="EMBL/GenBank/DDBJ databases">
        <authorList>
            <consortium name="The German cDNA consortium"/>
        </authorList>
    </citation>
    <scope>NUCLEOTIDE SEQUENCE [LARGE SCALE MRNA]</scope>
    <source>
        <tissue>Brain cortex</tissue>
    </source>
</reference>
<organism>
    <name type="scientific">Pongo abelii</name>
    <name type="common">Sumatran orangutan</name>
    <name type="synonym">Pongo pygmaeus abelii</name>
    <dbReference type="NCBI Taxonomy" id="9601"/>
    <lineage>
        <taxon>Eukaryota</taxon>
        <taxon>Metazoa</taxon>
        <taxon>Chordata</taxon>
        <taxon>Craniata</taxon>
        <taxon>Vertebrata</taxon>
        <taxon>Euteleostomi</taxon>
        <taxon>Mammalia</taxon>
        <taxon>Eutheria</taxon>
        <taxon>Euarchontoglires</taxon>
        <taxon>Primates</taxon>
        <taxon>Haplorrhini</taxon>
        <taxon>Catarrhini</taxon>
        <taxon>Hominidae</taxon>
        <taxon>Pongo</taxon>
    </lineage>
</organism>
<feature type="chain" id="PRO_0000310265" description="Cytosolic purine 5'-nucleotidase">
    <location>
        <begin position="1"/>
        <end position="561"/>
    </location>
</feature>
<feature type="region of interest" description="Disordered" evidence="4">
    <location>
        <begin position="538"/>
        <end position="561"/>
    </location>
</feature>
<feature type="region of interest" description="Required for tetramer assembly" evidence="2">
    <location>
        <begin position="548"/>
        <end position="561"/>
    </location>
</feature>
<feature type="compositionally biased region" description="Acidic residues" evidence="4">
    <location>
        <begin position="550"/>
        <end position="561"/>
    </location>
</feature>
<feature type="active site" description="Nucleophile" evidence="2">
    <location>
        <position position="52"/>
    </location>
</feature>
<feature type="active site" description="Proton donor" evidence="2">
    <location>
        <position position="54"/>
    </location>
</feature>
<feature type="binding site" evidence="2">
    <location>
        <position position="52"/>
    </location>
    <ligand>
        <name>IMP</name>
        <dbReference type="ChEBI" id="CHEBI:58053"/>
    </ligand>
</feature>
<feature type="binding site" evidence="2">
    <location>
        <position position="52"/>
    </location>
    <ligand>
        <name>Mg(2+)</name>
        <dbReference type="ChEBI" id="CHEBI:18420"/>
    </ligand>
</feature>
<feature type="binding site" evidence="2">
    <location>
        <position position="54"/>
    </location>
    <ligand>
        <name>IMP</name>
        <dbReference type="ChEBI" id="CHEBI:58053"/>
    </ligand>
</feature>
<feature type="binding site" evidence="2">
    <location>
        <position position="54"/>
    </location>
    <ligand>
        <name>Mg(2+)</name>
        <dbReference type="ChEBI" id="CHEBI:18420"/>
    </ligand>
</feature>
<feature type="binding site" evidence="2">
    <location>
        <position position="144"/>
    </location>
    <ligand>
        <name>ATP</name>
        <dbReference type="ChEBI" id="CHEBI:30616"/>
        <note>allosteric activator</note>
    </ligand>
</feature>
<feature type="binding site" evidence="2">
    <location>
        <position position="154"/>
    </location>
    <ligand>
        <name>ATP</name>
        <dbReference type="ChEBI" id="CHEBI:30616"/>
        <note>allosteric activator</note>
    </ligand>
</feature>
<feature type="binding site" evidence="2">
    <location>
        <position position="202"/>
    </location>
    <ligand>
        <name>IMP</name>
        <dbReference type="ChEBI" id="CHEBI:58053"/>
    </ligand>
</feature>
<feature type="binding site" evidence="2">
    <location>
        <position position="206"/>
    </location>
    <ligand>
        <name>IMP</name>
        <dbReference type="ChEBI" id="CHEBI:58053"/>
    </ligand>
</feature>
<feature type="binding site" evidence="2">
    <location>
        <position position="215"/>
    </location>
    <ligand>
        <name>IMP</name>
        <dbReference type="ChEBI" id="CHEBI:58053"/>
    </ligand>
</feature>
<feature type="binding site" evidence="2">
    <location>
        <position position="249"/>
    </location>
    <ligand>
        <name>IMP</name>
        <dbReference type="ChEBI" id="CHEBI:58053"/>
    </ligand>
</feature>
<feature type="binding site" evidence="2">
    <location>
        <position position="250"/>
    </location>
    <ligand>
        <name>IMP</name>
        <dbReference type="ChEBI" id="CHEBI:58053"/>
    </ligand>
</feature>
<feature type="binding site" evidence="2">
    <location>
        <position position="251"/>
    </location>
    <ligand>
        <name>IMP</name>
        <dbReference type="ChEBI" id="CHEBI:58053"/>
    </ligand>
</feature>
<feature type="binding site" evidence="2">
    <location>
        <position position="292"/>
    </location>
    <ligand>
        <name>IMP</name>
        <dbReference type="ChEBI" id="CHEBI:58053"/>
    </ligand>
</feature>
<feature type="binding site" evidence="2">
    <location>
        <position position="351"/>
    </location>
    <ligand>
        <name>Mg(2+)</name>
        <dbReference type="ChEBI" id="CHEBI:18420"/>
    </ligand>
</feature>
<feature type="binding site" evidence="2">
    <location>
        <position position="453"/>
    </location>
    <ligand>
        <name>ATP</name>
        <dbReference type="ChEBI" id="CHEBI:30616"/>
        <note>allosteric activator</note>
    </ligand>
</feature>
<feature type="binding site" evidence="2">
    <location>
        <position position="456"/>
    </location>
    <ligand>
        <name>ATP</name>
        <dbReference type="ChEBI" id="CHEBI:30616"/>
        <note>allosteric activator</note>
    </ligand>
</feature>
<feature type="modified residue" description="Phosphoserine" evidence="2">
    <location>
        <position position="418"/>
    </location>
</feature>
<feature type="modified residue" description="Phosphoserine" evidence="2">
    <location>
        <position position="502"/>
    </location>
</feature>
<feature type="modified residue" description="Phosphoserine" evidence="2">
    <location>
        <position position="511"/>
    </location>
</feature>
<feature type="modified residue" description="Phosphoserine" evidence="3">
    <location>
        <position position="527"/>
    </location>
</feature>
<comment type="function">
    <text evidence="2">Broad specificity cytosolic 5'-nucleotidase that catalyzes the dephosphorylation of 6-hydroxypurine nucleoside 5'-monophosphates. In addition, possesses a phosphotransferase activity by which it can transfer a phosphate from a donor nucleoside monophosphate to an acceptor nucleoside, preferably inosine, deoxyinosine and guanosine. Has the highest activities for IMP and GMP followed by dIMP, dGMP and XMP. Could also catalyze the transfer of phosphates from pyrimidine monophosphates but with lower efficiency. Through these activities regulates the purine nucleoside/nucleotide pools within the cell.</text>
</comment>
<comment type="catalytic activity">
    <reaction evidence="2">
        <text>a ribonucleoside 5'-phosphate + H2O = a ribonucleoside + phosphate</text>
        <dbReference type="Rhea" id="RHEA:12484"/>
        <dbReference type="ChEBI" id="CHEBI:15377"/>
        <dbReference type="ChEBI" id="CHEBI:18254"/>
        <dbReference type="ChEBI" id="CHEBI:43474"/>
        <dbReference type="ChEBI" id="CHEBI:58043"/>
        <dbReference type="EC" id="3.1.3.5"/>
    </reaction>
    <physiologicalReaction direction="left-to-right" evidence="2">
        <dbReference type="Rhea" id="RHEA:12485"/>
    </physiologicalReaction>
</comment>
<comment type="catalytic activity">
    <reaction evidence="2">
        <text>a 2'-deoxyribonucleoside + a ribonucleoside 5'-phosphate = a ribonucleoside + a 2'-deoxyribonucleoside 5'-phosphate</text>
        <dbReference type="Rhea" id="RHEA:19961"/>
        <dbReference type="ChEBI" id="CHEBI:18254"/>
        <dbReference type="ChEBI" id="CHEBI:18274"/>
        <dbReference type="ChEBI" id="CHEBI:58043"/>
        <dbReference type="ChEBI" id="CHEBI:65317"/>
        <dbReference type="EC" id="2.7.1.77"/>
    </reaction>
</comment>
<comment type="catalytic activity">
    <reaction evidence="2">
        <text>IMP + H2O = inosine + phosphate</text>
        <dbReference type="Rhea" id="RHEA:27718"/>
        <dbReference type="ChEBI" id="CHEBI:15377"/>
        <dbReference type="ChEBI" id="CHEBI:17596"/>
        <dbReference type="ChEBI" id="CHEBI:43474"/>
        <dbReference type="ChEBI" id="CHEBI:58053"/>
        <dbReference type="EC" id="3.1.3.99"/>
    </reaction>
    <physiologicalReaction direction="left-to-right" evidence="2">
        <dbReference type="Rhea" id="RHEA:27719"/>
    </physiologicalReaction>
</comment>
<comment type="catalytic activity">
    <reaction evidence="1">
        <text>GMP + H2O = guanosine + phosphate</text>
        <dbReference type="Rhea" id="RHEA:27714"/>
        <dbReference type="ChEBI" id="CHEBI:15377"/>
        <dbReference type="ChEBI" id="CHEBI:16750"/>
        <dbReference type="ChEBI" id="CHEBI:43474"/>
        <dbReference type="ChEBI" id="CHEBI:58115"/>
    </reaction>
    <physiologicalReaction direction="left-to-right" evidence="1">
        <dbReference type="Rhea" id="RHEA:27715"/>
    </physiologicalReaction>
</comment>
<comment type="catalytic activity">
    <reaction evidence="1">
        <text>dIMP + H2O = 2'-deoxyinosine + phosphate</text>
        <dbReference type="Rhea" id="RHEA:29383"/>
        <dbReference type="ChEBI" id="CHEBI:15377"/>
        <dbReference type="ChEBI" id="CHEBI:28997"/>
        <dbReference type="ChEBI" id="CHEBI:43474"/>
        <dbReference type="ChEBI" id="CHEBI:61194"/>
    </reaction>
    <physiologicalReaction direction="left-to-right" evidence="1">
        <dbReference type="Rhea" id="RHEA:29384"/>
    </physiologicalReaction>
</comment>
<comment type="catalytic activity">
    <reaction evidence="2">
        <text>dGMP + H2O = 2'-deoxyguanosine + phosphate</text>
        <dbReference type="Rhea" id="RHEA:29379"/>
        <dbReference type="ChEBI" id="CHEBI:15377"/>
        <dbReference type="ChEBI" id="CHEBI:17172"/>
        <dbReference type="ChEBI" id="CHEBI:43474"/>
        <dbReference type="ChEBI" id="CHEBI:57673"/>
    </reaction>
    <physiologicalReaction direction="left-to-right" evidence="2">
        <dbReference type="Rhea" id="RHEA:29380"/>
    </physiologicalReaction>
</comment>
<comment type="catalytic activity">
    <reaction evidence="1">
        <text>XMP + H2O = xanthosine + phosphate</text>
        <dbReference type="Rhea" id="RHEA:28530"/>
        <dbReference type="ChEBI" id="CHEBI:15377"/>
        <dbReference type="ChEBI" id="CHEBI:18107"/>
        <dbReference type="ChEBI" id="CHEBI:43474"/>
        <dbReference type="ChEBI" id="CHEBI:57464"/>
    </reaction>
    <physiologicalReaction direction="left-to-right" evidence="1">
        <dbReference type="Rhea" id="RHEA:28531"/>
    </physiologicalReaction>
</comment>
<comment type="catalytic activity">
    <reaction evidence="2">
        <text>inosine + GMP = guanosine + IMP</text>
        <dbReference type="Rhea" id="RHEA:69584"/>
        <dbReference type="ChEBI" id="CHEBI:16750"/>
        <dbReference type="ChEBI" id="CHEBI:17596"/>
        <dbReference type="ChEBI" id="CHEBI:58053"/>
        <dbReference type="ChEBI" id="CHEBI:58115"/>
    </reaction>
</comment>
<comment type="catalytic activity">
    <reaction evidence="2">
        <text>dGMP + inosine = 2'-deoxyguanosine + IMP</text>
        <dbReference type="Rhea" id="RHEA:69580"/>
        <dbReference type="ChEBI" id="CHEBI:17172"/>
        <dbReference type="ChEBI" id="CHEBI:17596"/>
        <dbReference type="ChEBI" id="CHEBI:57673"/>
        <dbReference type="ChEBI" id="CHEBI:58053"/>
    </reaction>
</comment>
<comment type="catalytic activity">
    <reaction evidence="2">
        <text>dIMP + inosine = 2'-deoxyinosine + IMP</text>
        <dbReference type="Rhea" id="RHEA:69572"/>
        <dbReference type="ChEBI" id="CHEBI:17596"/>
        <dbReference type="ChEBI" id="CHEBI:28997"/>
        <dbReference type="ChEBI" id="CHEBI:58053"/>
        <dbReference type="ChEBI" id="CHEBI:61194"/>
    </reaction>
</comment>
<comment type="catalytic activity">
    <reaction evidence="2">
        <text>inosine + UMP = uridine + IMP</text>
        <dbReference type="Rhea" id="RHEA:69588"/>
        <dbReference type="ChEBI" id="CHEBI:16704"/>
        <dbReference type="ChEBI" id="CHEBI:17596"/>
        <dbReference type="ChEBI" id="CHEBI:57865"/>
        <dbReference type="ChEBI" id="CHEBI:58053"/>
    </reaction>
</comment>
<comment type="catalytic activity">
    <reaction evidence="2">
        <text>inosine + CMP = cytidine + IMP</text>
        <dbReference type="Rhea" id="RHEA:69592"/>
        <dbReference type="ChEBI" id="CHEBI:17562"/>
        <dbReference type="ChEBI" id="CHEBI:17596"/>
        <dbReference type="ChEBI" id="CHEBI:58053"/>
        <dbReference type="ChEBI" id="CHEBI:60377"/>
    </reaction>
</comment>
<comment type="catalytic activity">
    <reaction evidence="2">
        <text>inosine + AMP = IMP + adenosine</text>
        <dbReference type="Rhea" id="RHEA:69596"/>
        <dbReference type="ChEBI" id="CHEBI:16335"/>
        <dbReference type="ChEBI" id="CHEBI:17596"/>
        <dbReference type="ChEBI" id="CHEBI:58053"/>
        <dbReference type="ChEBI" id="CHEBI:456215"/>
    </reaction>
</comment>
<comment type="cofactor">
    <cofactor evidence="2">
        <name>Mg(2+)</name>
        <dbReference type="ChEBI" id="CHEBI:18420"/>
    </cofactor>
    <text evidence="2">Binds 1 Mg(2+) ion per subunit.</text>
</comment>
<comment type="activity regulation">
    <text evidence="2">Allosterically activated by various compounds including ATP, 2,3-BPG/2,3-Bisphosphoglyceric acid and Ap4A/P1,P4-bis(5'-adenosyl) tetraphosphate. Binding of an allosteric activator is a prerequisiste to magnesium and substrate binding. Inhibited by inorganic phosphate.</text>
</comment>
<comment type="subunit">
    <text evidence="2">Homotetramer.</text>
</comment>
<comment type="subcellular location">
    <subcellularLocation>
        <location evidence="2">Cytoplasm</location>
        <location evidence="2">Cytosol</location>
    </subcellularLocation>
</comment>
<comment type="similarity">
    <text evidence="5">Belongs to the 5'(3')-deoxyribonucleotidase family.</text>
</comment>
<name>5NTC_PONAB</name>
<keyword id="KW-0021">Allosteric enzyme</keyword>
<keyword id="KW-0067">ATP-binding</keyword>
<keyword id="KW-0963">Cytoplasm</keyword>
<keyword id="KW-0378">Hydrolase</keyword>
<keyword id="KW-0460">Magnesium</keyword>
<keyword id="KW-0479">Metal-binding</keyword>
<keyword id="KW-0546">Nucleotide metabolism</keyword>
<keyword id="KW-0547">Nucleotide-binding</keyword>
<keyword id="KW-0597">Phosphoprotein</keyword>
<keyword id="KW-1185">Reference proteome</keyword>
<keyword id="KW-0808">Transferase</keyword>
<sequence length="561" mass="64970">MSTSWSDRLQNAADMPANMDKHALKKYRREAYHRVFVNRSLAMEKIKCFGFDMDYTLAVYKSPEYESLGFELTVERLVSIGYPQELLSFAYDSTFPTRGLVFDTLYGNLLKVDAYGNLLVCAHGFNFIRGPETREQYPNKFIQRDDTERFYILNTLFNLPETYLLACLVDFFTNCPRYTSCETGFKDGDLFMSYRSMFQDVRDAVDWVHYKGSLKEKTVENLEKYVVKDGKLPLLLSRMKEVGKVFLATNSDYKYTDKIMTYLFDFPHGPKPGSSHRPWQSYFDLILVDARKPLFFGEGTVLRQVDTKTGKLKIGTYTGPLQHGIVYSGGSSDTICDLLGAKGKDILYIGDHIFGDILKSKKRQGWRTFLVIPELAQELHVWTDKSSLFEELQSLDIFLAELYKHLDSSSNERPDISSIQRRIKKVTHDMDMCYGMMGSLFRSGSRQTLFASQVMRYADLYAASFINLLYYPFSYLFRAAHVLMPHESTVEHTHVDINEMESPLATRNRTSVDFKDTDYKRHQLTRSISEIKPPNLFPLAPQEITHCHDEDDDEEEEEEEE</sequence>
<evidence type="ECO:0000250" key="1">
    <source>
        <dbReference type="UniProtKB" id="D3ZMY7"/>
    </source>
</evidence>
<evidence type="ECO:0000250" key="2">
    <source>
        <dbReference type="UniProtKB" id="P49902"/>
    </source>
</evidence>
<evidence type="ECO:0000250" key="3">
    <source>
        <dbReference type="UniProtKB" id="Q3V1L4"/>
    </source>
</evidence>
<evidence type="ECO:0000256" key="4">
    <source>
        <dbReference type="SAM" id="MobiDB-lite"/>
    </source>
</evidence>
<evidence type="ECO:0000305" key="5"/>
<protein>
    <recommendedName>
        <fullName evidence="2">Cytosolic purine 5'-nucleotidase</fullName>
        <ecNumber evidence="2">3.1.3.5</ecNumber>
        <ecNumber evidence="2">3.1.3.99</ecNumber>
    </recommendedName>
    <alternativeName>
        <fullName evidence="2">Cytosolic nucleoside phosphotransferase 5'N</fullName>
        <ecNumber evidence="2">2.7.1.77</ecNumber>
    </alternativeName>
</protein>
<proteinExistence type="evidence at transcript level"/>